<sequence>MKYYGKCISYISILILTFFIGGCGFMNKENNKEAEIKESFHKTLSMYPIKNLEDLYDKEGYRDEEFEKRDKGTWIINSVMNIQKKGQAMESRGMVLYMNRNTRKTTGHFYTSITTEDKKGRVYNKEKNTLFNLKNNKIEPTKPIVDETLKNEIKNFQFFSQYGNFKNLKDYKNGNVSYNPNVPSYSAEYQLSNEDDNVKQLRKKYDIPTKKAPKLILKGDGDLKGSSIGHKHVELSFVRNKEESIYFSDSVEFNPSEVNNE</sequence>
<reference key="1">
    <citation type="journal article" date="2003" name="Mol. Microbiol.">
        <title>Genome-based analysis of virulence genes in a non-biofilm-forming Staphylococcus epidermidis strain (ATCC 12228).</title>
        <authorList>
            <person name="Zhang Y.-Q."/>
            <person name="Ren S.-X."/>
            <person name="Li H.-L."/>
            <person name="Wang Y.-X."/>
            <person name="Fu G."/>
            <person name="Yang J."/>
            <person name="Qin Z.-Q."/>
            <person name="Miao Y.-G."/>
            <person name="Wang W.-Y."/>
            <person name="Chen R.-S."/>
            <person name="Shen Y."/>
            <person name="Chen Z."/>
            <person name="Yuan Z.-H."/>
            <person name="Zhao G.-P."/>
            <person name="Qu D."/>
            <person name="Danchin A."/>
            <person name="Wen Y.-M."/>
        </authorList>
    </citation>
    <scope>NUCLEOTIDE SEQUENCE [LARGE SCALE GENOMIC DNA]</scope>
    <source>
        <strain>ATCC 12228 / FDA PCI 1200</strain>
    </source>
</reference>
<evidence type="ECO:0000255" key="1">
    <source>
        <dbReference type="PROSITE-ProRule" id="PRU00303"/>
    </source>
</evidence>
<evidence type="ECO:0000305" key="2"/>
<comment type="subcellular location">
    <subcellularLocation>
        <location evidence="1">Cell membrane</location>
        <topology evidence="1">Lipid-anchor</topology>
    </subcellularLocation>
</comment>
<comment type="similarity">
    <text evidence="2">Belongs to the staphylococcal tandem lipoprotein family.</text>
</comment>
<comment type="sequence caution" evidence="2">
    <conflict type="frameshift">
        <sequence resource="EMBL-CDS" id="AAO03783"/>
    </conflict>
    <text>Produces two separate ORFs.</text>
</comment>
<comment type="sequence caution" evidence="2">
    <conflict type="frameshift">
        <sequence resource="EMBL-CDS" id="AAO03784"/>
    </conflict>
    <text>Produces two separate ORFs.</text>
</comment>
<keyword id="KW-1003">Cell membrane</keyword>
<keyword id="KW-0449">Lipoprotein</keyword>
<keyword id="KW-0472">Membrane</keyword>
<keyword id="KW-0564">Palmitate</keyword>
<keyword id="KW-0732">Signal</keyword>
<dbReference type="EMBL" id="AE015929">
    <property type="protein sequence ID" value="AAO03783.1"/>
    <property type="status" value="ALT_FRAME"/>
    <property type="molecule type" value="Genomic_DNA"/>
</dbReference>
<dbReference type="EMBL" id="AE015929">
    <property type="protein sequence ID" value="AAO03784.1"/>
    <property type="status" value="ALT_FRAME"/>
    <property type="molecule type" value="Genomic_DNA"/>
</dbReference>
<dbReference type="RefSeq" id="NP_763741.1">
    <property type="nucleotide sequence ID" value="NC_004461.1"/>
</dbReference>
<dbReference type="RefSeq" id="NP_763742.1">
    <property type="nucleotide sequence ID" value="NC_004461.1"/>
</dbReference>
<dbReference type="SMR" id="Q8CTZ0"/>
<dbReference type="KEGG" id="sep:SE_0186"/>
<dbReference type="KEGG" id="sep:SE_0187"/>
<dbReference type="PATRIC" id="fig|176280.10.peg.169"/>
<dbReference type="HOGENOM" id="CLU_071589_2_1_9"/>
<dbReference type="OrthoDB" id="2189886at2"/>
<dbReference type="Proteomes" id="UP000001411">
    <property type="component" value="Chromosome"/>
</dbReference>
<dbReference type="GO" id="GO:0005886">
    <property type="term" value="C:plasma membrane"/>
    <property type="evidence" value="ECO:0007669"/>
    <property type="project" value="UniProtKB-SubCell"/>
</dbReference>
<dbReference type="Gene3D" id="2.50.20.40">
    <property type="match status" value="1"/>
</dbReference>
<dbReference type="InterPro" id="IPR007595">
    <property type="entry name" value="Csa"/>
</dbReference>
<dbReference type="InterPro" id="IPR038641">
    <property type="entry name" value="Csa_sf"/>
</dbReference>
<dbReference type="NCBIfam" id="TIGR01742">
    <property type="entry name" value="SA_tandem_lipo"/>
    <property type="match status" value="1"/>
</dbReference>
<dbReference type="Pfam" id="PF04507">
    <property type="entry name" value="DUF576"/>
    <property type="match status" value="1"/>
</dbReference>
<dbReference type="PROSITE" id="PS51257">
    <property type="entry name" value="PROKAR_LIPOPROTEIN"/>
    <property type="match status" value="1"/>
</dbReference>
<protein>
    <recommendedName>
        <fullName>Uncharacterized lipoprotein SE_0186/SE_0187</fullName>
    </recommendedName>
</protein>
<name>Y186_STAES</name>
<organism>
    <name type="scientific">Staphylococcus epidermidis (strain ATCC 12228 / FDA PCI 1200)</name>
    <dbReference type="NCBI Taxonomy" id="176280"/>
    <lineage>
        <taxon>Bacteria</taxon>
        <taxon>Bacillati</taxon>
        <taxon>Bacillota</taxon>
        <taxon>Bacilli</taxon>
        <taxon>Bacillales</taxon>
        <taxon>Staphylococcaceae</taxon>
        <taxon>Staphylococcus</taxon>
    </lineage>
</organism>
<accession>Q8CTZ0</accession>
<accession>Q8CTY9</accession>
<proteinExistence type="inferred from homology"/>
<gene>
    <name type="ordered locus">SE_0186/SE_0187</name>
</gene>
<feature type="signal peptide" evidence="1">
    <location>
        <begin position="1"/>
        <end position="22"/>
    </location>
</feature>
<feature type="chain" id="PRO_0000282195" description="Uncharacterized lipoprotein SE_0186/SE_0187">
    <location>
        <begin position="23"/>
        <end position="261"/>
    </location>
</feature>
<feature type="lipid moiety-binding region" description="N-palmitoyl cysteine" evidence="1">
    <location>
        <position position="23"/>
    </location>
</feature>
<feature type="lipid moiety-binding region" description="S-diacylglycerol cysteine" evidence="1">
    <location>
        <position position="23"/>
    </location>
</feature>